<accession>Q9FPS3</accession>
<accession>O65560</accession>
<accession>Q8L7U2</accession>
<feature type="chain" id="PRO_0000313050" description="Ubiquitin carboxyl-terminal hydrolase 24">
    <location>
        <begin position="1"/>
        <end position="551"/>
    </location>
</feature>
<feature type="domain" description="USP">
    <location>
        <begin position="197"/>
        <end position="551"/>
    </location>
</feature>
<feature type="region of interest" description="Disordered" evidence="4">
    <location>
        <begin position="51"/>
        <end position="104"/>
    </location>
</feature>
<feature type="region of interest" description="Disordered" evidence="4">
    <location>
        <begin position="163"/>
        <end position="188"/>
    </location>
</feature>
<feature type="region of interest" description="Disordered" evidence="4">
    <location>
        <begin position="329"/>
        <end position="349"/>
    </location>
</feature>
<feature type="compositionally biased region" description="Polar residues" evidence="4">
    <location>
        <begin position="329"/>
        <end position="338"/>
    </location>
</feature>
<feature type="active site" description="Nucleophile" evidence="2 3">
    <location>
        <position position="206"/>
    </location>
</feature>
<feature type="active site" description="Proton acceptor" evidence="2 3">
    <location>
        <position position="510"/>
    </location>
</feature>
<proteinExistence type="evidence at protein level"/>
<evidence type="ECO:0000250" key="1"/>
<evidence type="ECO:0000255" key="2">
    <source>
        <dbReference type="PROSITE-ProRule" id="PRU10092"/>
    </source>
</evidence>
<evidence type="ECO:0000255" key="3">
    <source>
        <dbReference type="PROSITE-ProRule" id="PRU10093"/>
    </source>
</evidence>
<evidence type="ECO:0000256" key="4">
    <source>
        <dbReference type="SAM" id="MobiDB-lite"/>
    </source>
</evidence>
<evidence type="ECO:0000305" key="5"/>
<sequence length="551" mass="60440">MSEKKVFVFGSFTEHETRSFFEQKPTKDPQNSKDKCVGSIQFGSLNLAAENSSVNTNGELKKGEADGTVKSAGSQERLDASRPASSDKNNDSDAKLPRKNSLRVPEHVVQNGIIKEISESNKSLNNGVAVKTDPIGLDNLSMSDGESDPVYKASSSKFQALDNEDFSSDSSSGSIQRKKNLKVPTESVPPVKDFTPRGLINAGNLCFLNATLQALLSCSPFVQLLQKIQLQDIPKADSPTLAAFSEFISELDVPSSSSIRNNVTVVEAGRPFRPAMFEGVLRNFTPDVLNNMSGRPRQEDAQEFLSFIMDQMHDELLKLKEQSPKVTASKSSVISSANDDGDEWETVGPKNKSAVTRTQSFVPSELSEIFGGQLKSVVKAKGTKASATVQPYLLLHLDIHPDGVQGIEDALHLFSAQEDLEGYRASVTGKTGVVSASKSIKIQKLSKIMILHLMRFSYGSQGSTKLRKGVKFPLELNLNRSHLVSLSNESLRYELVATITHHGWDPSKGHYTTDARRKNGQWLRFDDASVTPIGTKLVLHDQAYVLFYKQV</sequence>
<keyword id="KW-0378">Hydrolase</keyword>
<keyword id="KW-0645">Protease</keyword>
<keyword id="KW-1185">Reference proteome</keyword>
<keyword id="KW-0788">Thiol protease</keyword>
<keyword id="KW-0833">Ubl conjugation pathway</keyword>
<gene>
    <name type="primary">UBP24</name>
    <name type="ordered locus">At4g30890</name>
    <name type="ORF">F6I18.200</name>
</gene>
<protein>
    <recommendedName>
        <fullName>Ubiquitin carboxyl-terminal hydrolase 24</fullName>
        <ecNumber>3.4.19.12</ecNumber>
    </recommendedName>
    <alternativeName>
        <fullName>Deubiquitinating enzyme 24</fullName>
        <shortName>AtUBP24</shortName>
    </alternativeName>
    <alternativeName>
        <fullName>Ubiquitin thioesterase 24</fullName>
    </alternativeName>
    <alternativeName>
        <fullName>Ubiquitin-specific-processing protease 24</fullName>
    </alternativeName>
</protein>
<comment type="function">
    <text evidence="1">Recognizes and hydrolyzes the peptide bond at the C-terminal Gly of ubiquitin. Involved in the processing of poly-ubiquitin precursors as well as that of ubiquitinated proteins (By similarity).</text>
</comment>
<comment type="catalytic activity">
    <reaction>
        <text>Thiol-dependent hydrolysis of ester, thioester, amide, peptide and isopeptide bonds formed by the C-terminal Gly of ubiquitin (a 76-residue protein attached to proteins as an intracellular targeting signal).</text>
        <dbReference type="EC" id="3.4.19.12"/>
    </reaction>
</comment>
<comment type="similarity">
    <text evidence="5">Belongs to the peptidase C19 family.</text>
</comment>
<comment type="sequence caution" evidence="5">
    <conflict type="erroneous initiation">
        <sequence resource="EMBL-CDS" id="AAM83229"/>
    </conflict>
</comment>
<comment type="sequence caution" evidence="5">
    <conflict type="erroneous gene model prediction">
        <sequence resource="EMBL-CDS" id="CAA18204"/>
    </conflict>
</comment>
<comment type="sequence caution" evidence="5">
    <conflict type="erroneous gene model prediction">
        <sequence resource="EMBL-CDS" id="CAB79807"/>
    </conflict>
</comment>
<organism>
    <name type="scientific">Arabidopsis thaliana</name>
    <name type="common">Mouse-ear cress</name>
    <dbReference type="NCBI Taxonomy" id="3702"/>
    <lineage>
        <taxon>Eukaryota</taxon>
        <taxon>Viridiplantae</taxon>
        <taxon>Streptophyta</taxon>
        <taxon>Embryophyta</taxon>
        <taxon>Tracheophyta</taxon>
        <taxon>Spermatophyta</taxon>
        <taxon>Magnoliopsida</taxon>
        <taxon>eudicotyledons</taxon>
        <taxon>Gunneridae</taxon>
        <taxon>Pentapetalae</taxon>
        <taxon>rosids</taxon>
        <taxon>malvids</taxon>
        <taxon>Brassicales</taxon>
        <taxon>Brassicaceae</taxon>
        <taxon>Camelineae</taxon>
        <taxon>Arabidopsis</taxon>
    </lineage>
</organism>
<name>UBP24_ARATH</name>
<dbReference type="EC" id="3.4.19.12"/>
<dbReference type="EMBL" id="AF302672">
    <property type="protein sequence ID" value="AAG42762.1"/>
    <property type="molecule type" value="mRNA"/>
</dbReference>
<dbReference type="EMBL" id="AL022198">
    <property type="protein sequence ID" value="CAA18204.1"/>
    <property type="status" value="ALT_SEQ"/>
    <property type="molecule type" value="Genomic_DNA"/>
</dbReference>
<dbReference type="EMBL" id="AL161577">
    <property type="protein sequence ID" value="CAB79807.1"/>
    <property type="status" value="ALT_SEQ"/>
    <property type="molecule type" value="Genomic_DNA"/>
</dbReference>
<dbReference type="EMBL" id="CP002687">
    <property type="protein sequence ID" value="AEE85824.1"/>
    <property type="molecule type" value="Genomic_DNA"/>
</dbReference>
<dbReference type="EMBL" id="CP002687">
    <property type="protein sequence ID" value="AEE85825.1"/>
    <property type="molecule type" value="Genomic_DNA"/>
</dbReference>
<dbReference type="EMBL" id="CP002687">
    <property type="protein sequence ID" value="AEE85826.1"/>
    <property type="molecule type" value="Genomic_DNA"/>
</dbReference>
<dbReference type="EMBL" id="AY127002">
    <property type="protein sequence ID" value="AAM83229.1"/>
    <property type="status" value="ALT_INIT"/>
    <property type="molecule type" value="mRNA"/>
</dbReference>
<dbReference type="EMBL" id="BT000568">
    <property type="protein sequence ID" value="AAN18137.1"/>
    <property type="molecule type" value="mRNA"/>
</dbReference>
<dbReference type="PIR" id="F85361">
    <property type="entry name" value="F85361"/>
</dbReference>
<dbReference type="RefSeq" id="NP_001190875.1">
    <property type="nucleotide sequence ID" value="NM_001203946.1"/>
</dbReference>
<dbReference type="RefSeq" id="NP_567860.1">
    <property type="nucleotide sequence ID" value="NM_119236.4"/>
</dbReference>
<dbReference type="RefSeq" id="NP_974644.1">
    <property type="nucleotide sequence ID" value="NM_202915.2"/>
</dbReference>
<dbReference type="SMR" id="Q9FPS3"/>
<dbReference type="BioGRID" id="14500">
    <property type="interactions" value="2"/>
</dbReference>
<dbReference type="FunCoup" id="Q9FPS3">
    <property type="interactions" value="1923"/>
</dbReference>
<dbReference type="STRING" id="3702.Q9FPS3"/>
<dbReference type="MEROPS" id="C19.A14"/>
<dbReference type="iPTMnet" id="Q9FPS3"/>
<dbReference type="PaxDb" id="3702-AT4G30890.3"/>
<dbReference type="ProteomicsDB" id="228489"/>
<dbReference type="EnsemblPlants" id="AT4G30890.1">
    <property type="protein sequence ID" value="AT4G30890.1"/>
    <property type="gene ID" value="AT4G30890"/>
</dbReference>
<dbReference type="EnsemblPlants" id="AT4G30890.2">
    <property type="protein sequence ID" value="AT4G30890.2"/>
    <property type="gene ID" value="AT4G30890"/>
</dbReference>
<dbReference type="EnsemblPlants" id="AT4G30890.3">
    <property type="protein sequence ID" value="AT4G30890.3"/>
    <property type="gene ID" value="AT4G30890"/>
</dbReference>
<dbReference type="GeneID" id="829213"/>
<dbReference type="Gramene" id="AT4G30890.1">
    <property type="protein sequence ID" value="AT4G30890.1"/>
    <property type="gene ID" value="AT4G30890"/>
</dbReference>
<dbReference type="Gramene" id="AT4G30890.2">
    <property type="protein sequence ID" value="AT4G30890.2"/>
    <property type="gene ID" value="AT4G30890"/>
</dbReference>
<dbReference type="Gramene" id="AT4G30890.3">
    <property type="protein sequence ID" value="AT4G30890.3"/>
    <property type="gene ID" value="AT4G30890"/>
</dbReference>
<dbReference type="KEGG" id="ath:AT4G30890"/>
<dbReference type="Araport" id="AT4G30890"/>
<dbReference type="TAIR" id="AT4G30890">
    <property type="gene designation" value="UBP24"/>
</dbReference>
<dbReference type="eggNOG" id="KOG1865">
    <property type="taxonomic scope" value="Eukaryota"/>
</dbReference>
<dbReference type="eggNOG" id="KOG1871">
    <property type="taxonomic scope" value="Eukaryota"/>
</dbReference>
<dbReference type="HOGENOM" id="CLU_008279_7_3_1"/>
<dbReference type="InParanoid" id="Q9FPS3"/>
<dbReference type="OMA" id="INTSNTC"/>
<dbReference type="OrthoDB" id="429671at2759"/>
<dbReference type="PhylomeDB" id="Q9FPS3"/>
<dbReference type="PRO" id="PR:Q9FPS3"/>
<dbReference type="Proteomes" id="UP000006548">
    <property type="component" value="Chromosome 4"/>
</dbReference>
<dbReference type="ExpressionAtlas" id="Q9FPS3">
    <property type="expression patterns" value="baseline and differential"/>
</dbReference>
<dbReference type="GO" id="GO:0004843">
    <property type="term" value="F:cysteine-type deubiquitinase activity"/>
    <property type="evidence" value="ECO:0007669"/>
    <property type="project" value="UniProtKB-EC"/>
</dbReference>
<dbReference type="GO" id="GO:0016579">
    <property type="term" value="P:protein deubiquitination"/>
    <property type="evidence" value="ECO:0007669"/>
    <property type="project" value="InterPro"/>
</dbReference>
<dbReference type="GO" id="GO:0006508">
    <property type="term" value="P:proteolysis"/>
    <property type="evidence" value="ECO:0007669"/>
    <property type="project" value="UniProtKB-KW"/>
</dbReference>
<dbReference type="FunFam" id="3.90.70.10:FF:000108">
    <property type="entry name" value="Ubiquitin carboxyl-terminal hydrolase"/>
    <property type="match status" value="1"/>
</dbReference>
<dbReference type="Gene3D" id="3.90.70.10">
    <property type="entry name" value="Cysteine proteinases"/>
    <property type="match status" value="1"/>
</dbReference>
<dbReference type="InterPro" id="IPR038765">
    <property type="entry name" value="Papain-like_cys_pep_sf"/>
</dbReference>
<dbReference type="InterPro" id="IPR050164">
    <property type="entry name" value="Peptidase_C19"/>
</dbReference>
<dbReference type="InterPro" id="IPR001394">
    <property type="entry name" value="Peptidase_C19_UCH"/>
</dbReference>
<dbReference type="InterPro" id="IPR018200">
    <property type="entry name" value="USP_CS"/>
</dbReference>
<dbReference type="InterPro" id="IPR028889">
    <property type="entry name" value="USP_dom"/>
</dbReference>
<dbReference type="PANTHER" id="PTHR24006">
    <property type="entry name" value="UBIQUITIN CARBOXYL-TERMINAL HYDROLASE"/>
    <property type="match status" value="1"/>
</dbReference>
<dbReference type="PANTHER" id="PTHR24006:SF687">
    <property type="entry name" value="UBIQUITIN CARBOXYL-TERMINAL HYDROLASE 10"/>
    <property type="match status" value="1"/>
</dbReference>
<dbReference type="Pfam" id="PF00443">
    <property type="entry name" value="UCH"/>
    <property type="match status" value="1"/>
</dbReference>
<dbReference type="SUPFAM" id="SSF54001">
    <property type="entry name" value="Cysteine proteinases"/>
    <property type="match status" value="1"/>
</dbReference>
<dbReference type="PROSITE" id="PS00972">
    <property type="entry name" value="USP_1"/>
    <property type="match status" value="1"/>
</dbReference>
<dbReference type="PROSITE" id="PS00973">
    <property type="entry name" value="USP_2"/>
    <property type="match status" value="1"/>
</dbReference>
<dbReference type="PROSITE" id="PS50235">
    <property type="entry name" value="USP_3"/>
    <property type="match status" value="1"/>
</dbReference>
<reference key="1">
    <citation type="journal article" date="2000" name="Plant Physiol.">
        <title>The ubiquitin-specific protease family from Arabidopsis. AtUBP1 and 2 are required for the resistance to the amino acid analog canavanine.</title>
        <authorList>
            <person name="Yan N."/>
            <person name="Doelling J.H."/>
            <person name="Falbel T.G."/>
            <person name="Durski A.M."/>
            <person name="Vierstra R.D."/>
        </authorList>
    </citation>
    <scope>NUCLEOTIDE SEQUENCE [MRNA]</scope>
    <scope>GENE FAMILY ORGANIZATION</scope>
    <scope>NOMENCLATURE</scope>
    <source>
        <strain>cv. Columbia</strain>
    </source>
</reference>
<reference key="2">
    <citation type="journal article" date="1999" name="Nature">
        <title>Sequence and analysis of chromosome 4 of the plant Arabidopsis thaliana.</title>
        <authorList>
            <person name="Mayer K.F.X."/>
            <person name="Schueller C."/>
            <person name="Wambutt R."/>
            <person name="Murphy G."/>
            <person name="Volckaert G."/>
            <person name="Pohl T."/>
            <person name="Duesterhoeft A."/>
            <person name="Stiekema W."/>
            <person name="Entian K.-D."/>
            <person name="Terryn N."/>
            <person name="Harris B."/>
            <person name="Ansorge W."/>
            <person name="Brandt P."/>
            <person name="Grivell L.A."/>
            <person name="Rieger M."/>
            <person name="Weichselgartner M."/>
            <person name="de Simone V."/>
            <person name="Obermaier B."/>
            <person name="Mache R."/>
            <person name="Mueller M."/>
            <person name="Kreis M."/>
            <person name="Delseny M."/>
            <person name="Puigdomenech P."/>
            <person name="Watson M."/>
            <person name="Schmidtheini T."/>
            <person name="Reichert B."/>
            <person name="Portetelle D."/>
            <person name="Perez-Alonso M."/>
            <person name="Boutry M."/>
            <person name="Bancroft I."/>
            <person name="Vos P."/>
            <person name="Hoheisel J."/>
            <person name="Zimmermann W."/>
            <person name="Wedler H."/>
            <person name="Ridley P."/>
            <person name="Langham S.-A."/>
            <person name="McCullagh B."/>
            <person name="Bilham L."/>
            <person name="Robben J."/>
            <person name="van der Schueren J."/>
            <person name="Grymonprez B."/>
            <person name="Chuang Y.-J."/>
            <person name="Vandenbussche F."/>
            <person name="Braeken M."/>
            <person name="Weltjens I."/>
            <person name="Voet M."/>
            <person name="Bastiaens I."/>
            <person name="Aert R."/>
            <person name="Defoor E."/>
            <person name="Weitzenegger T."/>
            <person name="Bothe G."/>
            <person name="Ramsperger U."/>
            <person name="Hilbert H."/>
            <person name="Braun M."/>
            <person name="Holzer E."/>
            <person name="Brandt A."/>
            <person name="Peters S."/>
            <person name="van Staveren M."/>
            <person name="Dirkse W."/>
            <person name="Mooijman P."/>
            <person name="Klein Lankhorst R."/>
            <person name="Rose M."/>
            <person name="Hauf J."/>
            <person name="Koetter P."/>
            <person name="Berneiser S."/>
            <person name="Hempel S."/>
            <person name="Feldpausch M."/>
            <person name="Lamberth S."/>
            <person name="Van den Daele H."/>
            <person name="De Keyser A."/>
            <person name="Buysshaert C."/>
            <person name="Gielen J."/>
            <person name="Villarroel R."/>
            <person name="De Clercq R."/>
            <person name="van Montagu M."/>
            <person name="Rogers J."/>
            <person name="Cronin A."/>
            <person name="Quail M.A."/>
            <person name="Bray-Allen S."/>
            <person name="Clark L."/>
            <person name="Doggett J."/>
            <person name="Hall S."/>
            <person name="Kay M."/>
            <person name="Lennard N."/>
            <person name="McLay K."/>
            <person name="Mayes R."/>
            <person name="Pettett A."/>
            <person name="Rajandream M.A."/>
            <person name="Lyne M."/>
            <person name="Benes V."/>
            <person name="Rechmann S."/>
            <person name="Borkova D."/>
            <person name="Bloecker H."/>
            <person name="Scharfe M."/>
            <person name="Grimm M."/>
            <person name="Loehnert T.-H."/>
            <person name="Dose S."/>
            <person name="de Haan M."/>
            <person name="Maarse A.C."/>
            <person name="Schaefer M."/>
            <person name="Mueller-Auer S."/>
            <person name="Gabel C."/>
            <person name="Fuchs M."/>
            <person name="Fartmann B."/>
            <person name="Granderath K."/>
            <person name="Dauner D."/>
            <person name="Herzl A."/>
            <person name="Neumann S."/>
            <person name="Argiriou A."/>
            <person name="Vitale D."/>
            <person name="Liguori R."/>
            <person name="Piravandi E."/>
            <person name="Massenet O."/>
            <person name="Quigley F."/>
            <person name="Clabauld G."/>
            <person name="Muendlein A."/>
            <person name="Felber R."/>
            <person name="Schnabl S."/>
            <person name="Hiller R."/>
            <person name="Schmidt W."/>
            <person name="Lecharny A."/>
            <person name="Aubourg S."/>
            <person name="Chefdor F."/>
            <person name="Cooke R."/>
            <person name="Berger C."/>
            <person name="Monfort A."/>
            <person name="Casacuberta E."/>
            <person name="Gibbons T."/>
            <person name="Weber N."/>
            <person name="Vandenbol M."/>
            <person name="Bargues M."/>
            <person name="Terol J."/>
            <person name="Torres A."/>
            <person name="Perez-Perez A."/>
            <person name="Purnelle B."/>
            <person name="Bent E."/>
            <person name="Johnson S."/>
            <person name="Tacon D."/>
            <person name="Jesse T."/>
            <person name="Heijnen L."/>
            <person name="Schwarz S."/>
            <person name="Scholler P."/>
            <person name="Heber S."/>
            <person name="Francs P."/>
            <person name="Bielke C."/>
            <person name="Frishman D."/>
            <person name="Haase D."/>
            <person name="Lemcke K."/>
            <person name="Mewes H.-W."/>
            <person name="Stocker S."/>
            <person name="Zaccaria P."/>
            <person name="Bevan M."/>
            <person name="Wilson R.K."/>
            <person name="de la Bastide M."/>
            <person name="Habermann K."/>
            <person name="Parnell L."/>
            <person name="Dedhia N."/>
            <person name="Gnoj L."/>
            <person name="Schutz K."/>
            <person name="Huang E."/>
            <person name="Spiegel L."/>
            <person name="Sekhon M."/>
            <person name="Murray J."/>
            <person name="Sheet P."/>
            <person name="Cordes M."/>
            <person name="Abu-Threideh J."/>
            <person name="Stoneking T."/>
            <person name="Kalicki J."/>
            <person name="Graves T."/>
            <person name="Harmon G."/>
            <person name="Edwards J."/>
            <person name="Latreille P."/>
            <person name="Courtney L."/>
            <person name="Cloud J."/>
            <person name="Abbott A."/>
            <person name="Scott K."/>
            <person name="Johnson D."/>
            <person name="Minx P."/>
            <person name="Bentley D."/>
            <person name="Fulton B."/>
            <person name="Miller N."/>
            <person name="Greco T."/>
            <person name="Kemp K."/>
            <person name="Kramer J."/>
            <person name="Fulton L."/>
            <person name="Mardis E."/>
            <person name="Dante M."/>
            <person name="Pepin K."/>
            <person name="Hillier L.W."/>
            <person name="Nelson J."/>
            <person name="Spieth J."/>
            <person name="Ryan E."/>
            <person name="Andrews S."/>
            <person name="Geisel C."/>
            <person name="Layman D."/>
            <person name="Du H."/>
            <person name="Ali J."/>
            <person name="Berghoff A."/>
            <person name="Jones K."/>
            <person name="Drone K."/>
            <person name="Cotton M."/>
            <person name="Joshu C."/>
            <person name="Antonoiu B."/>
            <person name="Zidanic M."/>
            <person name="Strong C."/>
            <person name="Sun H."/>
            <person name="Lamar B."/>
            <person name="Yordan C."/>
            <person name="Ma P."/>
            <person name="Zhong J."/>
            <person name="Preston R."/>
            <person name="Vil D."/>
            <person name="Shekher M."/>
            <person name="Matero A."/>
            <person name="Shah R."/>
            <person name="Swaby I.K."/>
            <person name="O'Shaughnessy A."/>
            <person name="Rodriguez M."/>
            <person name="Hoffman J."/>
            <person name="Till S."/>
            <person name="Granat S."/>
            <person name="Shohdy N."/>
            <person name="Hasegawa A."/>
            <person name="Hameed A."/>
            <person name="Lodhi M."/>
            <person name="Johnson A."/>
            <person name="Chen E."/>
            <person name="Marra M.A."/>
            <person name="Martienssen R."/>
            <person name="McCombie W.R."/>
        </authorList>
    </citation>
    <scope>NUCLEOTIDE SEQUENCE [LARGE SCALE GENOMIC DNA]</scope>
    <source>
        <strain>cv. Columbia</strain>
    </source>
</reference>
<reference key="3">
    <citation type="journal article" date="2017" name="Plant J.">
        <title>Araport11: a complete reannotation of the Arabidopsis thaliana reference genome.</title>
        <authorList>
            <person name="Cheng C.Y."/>
            <person name="Krishnakumar V."/>
            <person name="Chan A.P."/>
            <person name="Thibaud-Nissen F."/>
            <person name="Schobel S."/>
            <person name="Town C.D."/>
        </authorList>
    </citation>
    <scope>GENOME REANNOTATION</scope>
    <source>
        <strain>cv. Columbia</strain>
    </source>
</reference>
<reference key="4">
    <citation type="journal article" date="2003" name="Science">
        <title>Empirical analysis of transcriptional activity in the Arabidopsis genome.</title>
        <authorList>
            <person name="Yamada K."/>
            <person name="Lim J."/>
            <person name="Dale J.M."/>
            <person name="Chen H."/>
            <person name="Shinn P."/>
            <person name="Palm C.J."/>
            <person name="Southwick A.M."/>
            <person name="Wu H.C."/>
            <person name="Kim C.J."/>
            <person name="Nguyen M."/>
            <person name="Pham P.K."/>
            <person name="Cheuk R.F."/>
            <person name="Karlin-Newmann G."/>
            <person name="Liu S.X."/>
            <person name="Lam B."/>
            <person name="Sakano H."/>
            <person name="Wu T."/>
            <person name="Yu G."/>
            <person name="Miranda M."/>
            <person name="Quach H.L."/>
            <person name="Tripp M."/>
            <person name="Chang C.H."/>
            <person name="Lee J.M."/>
            <person name="Toriumi M.J."/>
            <person name="Chan M.M."/>
            <person name="Tang C.C."/>
            <person name="Onodera C.S."/>
            <person name="Deng J.M."/>
            <person name="Akiyama K."/>
            <person name="Ansari Y."/>
            <person name="Arakawa T."/>
            <person name="Banh J."/>
            <person name="Banno F."/>
            <person name="Bowser L."/>
            <person name="Brooks S.Y."/>
            <person name="Carninci P."/>
            <person name="Chao Q."/>
            <person name="Choy N."/>
            <person name="Enju A."/>
            <person name="Goldsmith A.D."/>
            <person name="Gurjal M."/>
            <person name="Hansen N.F."/>
            <person name="Hayashizaki Y."/>
            <person name="Johnson-Hopson C."/>
            <person name="Hsuan V.W."/>
            <person name="Iida K."/>
            <person name="Karnes M."/>
            <person name="Khan S."/>
            <person name="Koesema E."/>
            <person name="Ishida J."/>
            <person name="Jiang P.X."/>
            <person name="Jones T."/>
            <person name="Kawai J."/>
            <person name="Kamiya A."/>
            <person name="Meyers C."/>
            <person name="Nakajima M."/>
            <person name="Narusaka M."/>
            <person name="Seki M."/>
            <person name="Sakurai T."/>
            <person name="Satou M."/>
            <person name="Tamse R."/>
            <person name="Vaysberg M."/>
            <person name="Wallender E.K."/>
            <person name="Wong C."/>
            <person name="Yamamura Y."/>
            <person name="Yuan S."/>
            <person name="Shinozaki K."/>
            <person name="Davis R.W."/>
            <person name="Theologis A."/>
            <person name="Ecker J.R."/>
        </authorList>
    </citation>
    <scope>NUCLEOTIDE SEQUENCE [LARGE SCALE MRNA] OF 274-551</scope>
    <source>
        <strain>cv. Columbia</strain>
    </source>
</reference>
<reference key="5">
    <citation type="journal article" date="2008" name="J. Proteome Res.">
        <title>Site-specific phosphorylation profiling of Arabidopsis proteins by mass spectrometry and peptide chip analysis.</title>
        <authorList>
            <person name="de la Fuente van Bentem S."/>
            <person name="Anrather D."/>
            <person name="Dohnal I."/>
            <person name="Roitinger E."/>
            <person name="Csaszar E."/>
            <person name="Joore J."/>
            <person name="Buijnink J."/>
            <person name="Carreri A."/>
            <person name="Forzani C."/>
            <person name="Lorkovic Z.J."/>
            <person name="Barta A."/>
            <person name="Lecourieux D."/>
            <person name="Verhounig A."/>
            <person name="Jonak C."/>
            <person name="Hirt H."/>
        </authorList>
    </citation>
    <scope>IDENTIFICATION BY MASS SPECTROMETRY [LARGE SCALE ANALYSIS]</scope>
    <source>
        <tissue>Root</tissue>
    </source>
</reference>
<reference key="6">
    <citation type="journal article" date="2009" name="J. Proteomics">
        <title>Phosphoproteomic analysis of nuclei-enriched fractions from Arabidopsis thaliana.</title>
        <authorList>
            <person name="Jones A.M.E."/>
            <person name="MacLean D."/>
            <person name="Studholme D.J."/>
            <person name="Serna-Sanz A."/>
            <person name="Andreasson E."/>
            <person name="Rathjen J.P."/>
            <person name="Peck S.C."/>
        </authorList>
    </citation>
    <scope>IDENTIFICATION BY MASS SPECTROMETRY [LARGE SCALE ANALYSIS]</scope>
    <source>
        <strain>cv. Columbia</strain>
    </source>
</reference>
<reference key="7">
    <citation type="journal article" date="2009" name="Plant Physiol.">
        <title>Large-scale Arabidopsis phosphoproteome profiling reveals novel chloroplast kinase substrates and phosphorylation networks.</title>
        <authorList>
            <person name="Reiland S."/>
            <person name="Messerli G."/>
            <person name="Baerenfaller K."/>
            <person name="Gerrits B."/>
            <person name="Endler A."/>
            <person name="Grossmann J."/>
            <person name="Gruissem W."/>
            <person name="Baginsky S."/>
        </authorList>
    </citation>
    <scope>IDENTIFICATION BY MASS SPECTROMETRY [LARGE SCALE ANALYSIS]</scope>
</reference>